<accession>P0A4Z5</accession>
<accession>A0A1R3Y1G8</accession>
<accession>P36919</accession>
<accession>P95015</accession>
<accession>X2BL40</accession>
<feature type="chain" id="PRO_0000140755" description="3-dehydroquinate synthase">
    <location>
        <begin position="1"/>
        <end position="362"/>
    </location>
</feature>
<feature type="binding site" evidence="1">
    <location>
        <begin position="73"/>
        <end position="78"/>
    </location>
    <ligand>
        <name>NAD(+)</name>
        <dbReference type="ChEBI" id="CHEBI:57540"/>
    </ligand>
</feature>
<feature type="binding site" evidence="1">
    <location>
        <begin position="107"/>
        <end position="111"/>
    </location>
    <ligand>
        <name>NAD(+)</name>
        <dbReference type="ChEBI" id="CHEBI:57540"/>
    </ligand>
</feature>
<feature type="binding site" evidence="1">
    <location>
        <begin position="131"/>
        <end position="132"/>
    </location>
    <ligand>
        <name>NAD(+)</name>
        <dbReference type="ChEBI" id="CHEBI:57540"/>
    </ligand>
</feature>
<feature type="binding site" evidence="1">
    <location>
        <position position="144"/>
    </location>
    <ligand>
        <name>NAD(+)</name>
        <dbReference type="ChEBI" id="CHEBI:57540"/>
    </ligand>
</feature>
<feature type="binding site" evidence="1">
    <location>
        <position position="153"/>
    </location>
    <ligand>
        <name>NAD(+)</name>
        <dbReference type="ChEBI" id="CHEBI:57540"/>
    </ligand>
</feature>
<feature type="binding site" evidence="1">
    <location>
        <begin position="171"/>
        <end position="174"/>
    </location>
    <ligand>
        <name>NAD(+)</name>
        <dbReference type="ChEBI" id="CHEBI:57540"/>
    </ligand>
</feature>
<feature type="binding site" evidence="1">
    <location>
        <position position="186"/>
    </location>
    <ligand>
        <name>Zn(2+)</name>
        <dbReference type="ChEBI" id="CHEBI:29105"/>
    </ligand>
</feature>
<feature type="binding site" evidence="1">
    <location>
        <position position="249"/>
    </location>
    <ligand>
        <name>Zn(2+)</name>
        <dbReference type="ChEBI" id="CHEBI:29105"/>
    </ligand>
</feature>
<feature type="binding site" evidence="1">
    <location>
        <position position="265"/>
    </location>
    <ligand>
        <name>Zn(2+)</name>
        <dbReference type="ChEBI" id="CHEBI:29105"/>
    </ligand>
</feature>
<dbReference type="EC" id="4.2.3.4" evidence="1"/>
<dbReference type="EMBL" id="LT708304">
    <property type="protein sequence ID" value="SIU01184.1"/>
    <property type="molecule type" value="Genomic_DNA"/>
</dbReference>
<dbReference type="RefSeq" id="NP_856213.1">
    <property type="nucleotide sequence ID" value="NC_002945.3"/>
</dbReference>
<dbReference type="RefSeq" id="WP_003413008.1">
    <property type="nucleotide sequence ID" value="NC_002945.4"/>
</dbReference>
<dbReference type="SMR" id="P0A4Z5"/>
<dbReference type="KEGG" id="mbo:BQ2027_MB2567C"/>
<dbReference type="PATRIC" id="fig|233413.5.peg.2824"/>
<dbReference type="UniPathway" id="UPA00053">
    <property type="reaction ID" value="UER00085"/>
</dbReference>
<dbReference type="Proteomes" id="UP000001419">
    <property type="component" value="Chromosome"/>
</dbReference>
<dbReference type="GO" id="GO:0005737">
    <property type="term" value="C:cytoplasm"/>
    <property type="evidence" value="ECO:0007669"/>
    <property type="project" value="UniProtKB-SubCell"/>
</dbReference>
<dbReference type="GO" id="GO:0003856">
    <property type="term" value="F:3-dehydroquinate synthase activity"/>
    <property type="evidence" value="ECO:0007669"/>
    <property type="project" value="UniProtKB-UniRule"/>
</dbReference>
<dbReference type="GO" id="GO:0046872">
    <property type="term" value="F:metal ion binding"/>
    <property type="evidence" value="ECO:0007669"/>
    <property type="project" value="UniProtKB-KW"/>
</dbReference>
<dbReference type="GO" id="GO:0000166">
    <property type="term" value="F:nucleotide binding"/>
    <property type="evidence" value="ECO:0007669"/>
    <property type="project" value="UniProtKB-KW"/>
</dbReference>
<dbReference type="GO" id="GO:0008652">
    <property type="term" value="P:amino acid biosynthetic process"/>
    <property type="evidence" value="ECO:0007669"/>
    <property type="project" value="UniProtKB-KW"/>
</dbReference>
<dbReference type="GO" id="GO:0009073">
    <property type="term" value="P:aromatic amino acid family biosynthetic process"/>
    <property type="evidence" value="ECO:0007669"/>
    <property type="project" value="UniProtKB-KW"/>
</dbReference>
<dbReference type="GO" id="GO:0009423">
    <property type="term" value="P:chorismate biosynthetic process"/>
    <property type="evidence" value="ECO:0007669"/>
    <property type="project" value="UniProtKB-UniRule"/>
</dbReference>
<dbReference type="CDD" id="cd08195">
    <property type="entry name" value="DHQS"/>
    <property type="match status" value="1"/>
</dbReference>
<dbReference type="FunFam" id="1.20.1090.10:FF:000006">
    <property type="entry name" value="3-dehydroquinate synthase"/>
    <property type="match status" value="1"/>
</dbReference>
<dbReference type="FunFam" id="3.40.50.1970:FF:000012">
    <property type="entry name" value="3-dehydroquinate synthase"/>
    <property type="match status" value="1"/>
</dbReference>
<dbReference type="Gene3D" id="3.40.50.1970">
    <property type="match status" value="1"/>
</dbReference>
<dbReference type="Gene3D" id="1.20.1090.10">
    <property type="entry name" value="Dehydroquinate synthase-like - alpha domain"/>
    <property type="match status" value="1"/>
</dbReference>
<dbReference type="HAMAP" id="MF_00110">
    <property type="entry name" value="DHQ_synthase"/>
    <property type="match status" value="1"/>
</dbReference>
<dbReference type="InterPro" id="IPR050071">
    <property type="entry name" value="Dehydroquinate_synthase"/>
</dbReference>
<dbReference type="InterPro" id="IPR016037">
    <property type="entry name" value="DHQ_synth_AroB"/>
</dbReference>
<dbReference type="InterPro" id="IPR030963">
    <property type="entry name" value="DHQ_synth_fam"/>
</dbReference>
<dbReference type="InterPro" id="IPR030960">
    <property type="entry name" value="DHQS/DOIS_N"/>
</dbReference>
<dbReference type="InterPro" id="IPR056179">
    <property type="entry name" value="DHQS_C"/>
</dbReference>
<dbReference type="NCBIfam" id="TIGR01357">
    <property type="entry name" value="aroB"/>
    <property type="match status" value="1"/>
</dbReference>
<dbReference type="PANTHER" id="PTHR43622">
    <property type="entry name" value="3-DEHYDROQUINATE SYNTHASE"/>
    <property type="match status" value="1"/>
</dbReference>
<dbReference type="PANTHER" id="PTHR43622:SF7">
    <property type="entry name" value="3-DEHYDROQUINATE SYNTHASE, CHLOROPLASTIC"/>
    <property type="match status" value="1"/>
</dbReference>
<dbReference type="Pfam" id="PF01761">
    <property type="entry name" value="DHQ_synthase"/>
    <property type="match status" value="1"/>
</dbReference>
<dbReference type="Pfam" id="PF24621">
    <property type="entry name" value="DHQS_C"/>
    <property type="match status" value="1"/>
</dbReference>
<dbReference type="PIRSF" id="PIRSF001455">
    <property type="entry name" value="DHQ_synth"/>
    <property type="match status" value="1"/>
</dbReference>
<dbReference type="SUPFAM" id="SSF56796">
    <property type="entry name" value="Dehydroquinate synthase-like"/>
    <property type="match status" value="1"/>
</dbReference>
<name>AROB_MYCBO</name>
<sequence>MTDIGAPVTVQVAVDPPYPVVIGTGLLDELEDLLADRHKVAVVHQPGLAETAEEIRKRLAGKGVDAHRIEIPDAEAGKDLPVVGFIWEVLGRIGIGRKDALVSLGGGAATDVAGFAAATWLRGVSIVHLPTTLLGMVDAAVGGKTGINTDAGKNLVGAFHQPLAVLVDLATLQTLPRDEMICGMAEVVKAGFIADPVILDLIEADPQAALDPAGDVLPELIRRAITVKAEVVAADEKESELREILNYGHTLGHAIERRERYRWRHGAAVSVGLVFAAELARLAGRLDDATAQRHRTILSSLGLPVSYDPDALPQLLEIMAGDKKTRAGVLRFVVLDGLAKPGRMVGPDPGLLVTAYAGVCAP</sequence>
<organism>
    <name type="scientific">Mycobacterium bovis (strain ATCC BAA-935 / AF2122/97)</name>
    <dbReference type="NCBI Taxonomy" id="233413"/>
    <lineage>
        <taxon>Bacteria</taxon>
        <taxon>Bacillati</taxon>
        <taxon>Actinomycetota</taxon>
        <taxon>Actinomycetes</taxon>
        <taxon>Mycobacteriales</taxon>
        <taxon>Mycobacteriaceae</taxon>
        <taxon>Mycobacterium</taxon>
        <taxon>Mycobacterium tuberculosis complex</taxon>
    </lineage>
</organism>
<evidence type="ECO:0000255" key="1">
    <source>
        <dbReference type="HAMAP-Rule" id="MF_00110"/>
    </source>
</evidence>
<evidence type="ECO:0000305" key="2"/>
<comment type="function">
    <text evidence="1">Catalyzes the conversion of 3-deoxy-D-arabino-heptulosonate 7-phosphate (DAHP) to dehydroquinate (DHQ).</text>
</comment>
<comment type="catalytic activity">
    <reaction evidence="1">
        <text>7-phospho-2-dehydro-3-deoxy-D-arabino-heptonate = 3-dehydroquinate + phosphate</text>
        <dbReference type="Rhea" id="RHEA:21968"/>
        <dbReference type="ChEBI" id="CHEBI:32364"/>
        <dbReference type="ChEBI" id="CHEBI:43474"/>
        <dbReference type="ChEBI" id="CHEBI:58394"/>
        <dbReference type="EC" id="4.2.3.4"/>
    </reaction>
</comment>
<comment type="cofactor">
    <cofactor evidence="1">
        <name>NAD(+)</name>
        <dbReference type="ChEBI" id="CHEBI:57540"/>
    </cofactor>
</comment>
<comment type="cofactor">
    <cofactor evidence="1">
        <name>Co(2+)</name>
        <dbReference type="ChEBI" id="CHEBI:48828"/>
    </cofactor>
    <cofactor evidence="1">
        <name>Zn(2+)</name>
        <dbReference type="ChEBI" id="CHEBI:29105"/>
    </cofactor>
    <text evidence="1">Binds 1 divalent metal cation per subunit. Can use either Co(2+) or Zn(2+).</text>
</comment>
<comment type="pathway">
    <text evidence="1">Metabolic intermediate biosynthesis; chorismate biosynthesis; chorismate from D-erythrose 4-phosphate and phosphoenolpyruvate: step 2/7.</text>
</comment>
<comment type="subcellular location">
    <subcellularLocation>
        <location evidence="1">Cytoplasm</location>
    </subcellularLocation>
</comment>
<comment type="similarity">
    <text evidence="1 2">Belongs to the sugar phosphate cyclases superfamily. Dehydroquinate synthase family.</text>
</comment>
<protein>
    <recommendedName>
        <fullName evidence="1">3-dehydroquinate synthase</fullName>
        <shortName evidence="1">DHQS</shortName>
        <ecNumber evidence="1">4.2.3.4</ecNumber>
    </recommendedName>
</protein>
<proteinExistence type="inferred from homology"/>
<reference key="1">
    <citation type="journal article" date="2003" name="Proc. Natl. Acad. Sci. U.S.A.">
        <title>The complete genome sequence of Mycobacterium bovis.</title>
        <authorList>
            <person name="Garnier T."/>
            <person name="Eiglmeier K."/>
            <person name="Camus J.-C."/>
            <person name="Medina N."/>
            <person name="Mansoor H."/>
            <person name="Pryor M."/>
            <person name="Duthoy S."/>
            <person name="Grondin S."/>
            <person name="Lacroix C."/>
            <person name="Monsempe C."/>
            <person name="Simon S."/>
            <person name="Harris B."/>
            <person name="Atkin R."/>
            <person name="Doggett J."/>
            <person name="Mayes R."/>
            <person name="Keating L."/>
            <person name="Wheeler P.R."/>
            <person name="Parkhill J."/>
            <person name="Barrell B.G."/>
            <person name="Cole S.T."/>
            <person name="Gordon S.V."/>
            <person name="Hewinson R.G."/>
        </authorList>
    </citation>
    <scope>NUCLEOTIDE SEQUENCE [LARGE SCALE GENOMIC DNA]</scope>
    <source>
        <strain>ATCC BAA-935 / AF2122/97</strain>
    </source>
</reference>
<reference key="2">
    <citation type="journal article" date="2017" name="Genome Announc.">
        <title>Updated reference genome sequence and annotation of Mycobacterium bovis AF2122/97.</title>
        <authorList>
            <person name="Malone K.M."/>
            <person name="Farrell D."/>
            <person name="Stuber T.P."/>
            <person name="Schubert O.T."/>
            <person name="Aebersold R."/>
            <person name="Robbe-Austerman S."/>
            <person name="Gordon S.V."/>
        </authorList>
    </citation>
    <scope>NUCLEOTIDE SEQUENCE [LARGE SCALE GENOMIC DNA]</scope>
    <scope>GENOME REANNOTATION</scope>
    <source>
        <strain>ATCC BAA-935 / AF2122/97</strain>
    </source>
</reference>
<gene>
    <name evidence="1" type="primary">aroB</name>
    <name type="ordered locus">BQ2027_MB2567C</name>
</gene>
<keyword id="KW-0028">Amino-acid biosynthesis</keyword>
<keyword id="KW-0057">Aromatic amino acid biosynthesis</keyword>
<keyword id="KW-0170">Cobalt</keyword>
<keyword id="KW-0963">Cytoplasm</keyword>
<keyword id="KW-0456">Lyase</keyword>
<keyword id="KW-0479">Metal-binding</keyword>
<keyword id="KW-0520">NAD</keyword>
<keyword id="KW-0547">Nucleotide-binding</keyword>
<keyword id="KW-1185">Reference proteome</keyword>
<keyword id="KW-0862">Zinc</keyword>